<protein>
    <recommendedName>
        <fullName>Caeridin-1.4</fullName>
    </recommendedName>
</protein>
<organism>
    <name type="scientific">Ranoidea xanthomera</name>
    <name type="common">Northern orange-eyed tree frog</name>
    <name type="synonym">Litoria xanthomera</name>
    <dbReference type="NCBI Taxonomy" id="79697"/>
    <lineage>
        <taxon>Eukaryota</taxon>
        <taxon>Metazoa</taxon>
        <taxon>Chordata</taxon>
        <taxon>Craniata</taxon>
        <taxon>Vertebrata</taxon>
        <taxon>Euteleostomi</taxon>
        <taxon>Amphibia</taxon>
        <taxon>Batrachia</taxon>
        <taxon>Anura</taxon>
        <taxon>Neobatrachia</taxon>
        <taxon>Hyloidea</taxon>
        <taxon>Hylidae</taxon>
        <taxon>Pelodryadinae</taxon>
        <taxon>Litoria</taxon>
    </lineage>
</organism>
<sequence length="12" mass="1097">GLLDGLLGGLGL</sequence>
<keyword id="KW-0027">Amidation</keyword>
<keyword id="KW-0878">Amphibian defense peptide</keyword>
<keyword id="KW-0903">Direct protein sequencing</keyword>
<keyword id="KW-0964">Secreted</keyword>
<comment type="function">
    <text>Caeridins show neither neuropeptide activity nor antibiotic activity.</text>
</comment>
<comment type="subcellular location">
    <subcellularLocation>
        <location>Secreted</location>
    </subcellularLocation>
</comment>
<comment type="tissue specificity">
    <text>Expressed by the skin dorsal glands.</text>
</comment>
<comment type="mass spectrometry" mass="1096.0" method="FAB" evidence="1"/>
<reference key="1">
    <citation type="journal article" date="1997" name="J. Pept. Sci.">
        <title>New caerin antibacterial peptides from the skin glands of the Australian tree frog Litoria xanthomera.</title>
        <authorList>
            <person name="Steinborner S.T."/>
            <person name="Waugh R.J."/>
            <person name="Bowie J.H."/>
            <person name="Wallace J.C."/>
            <person name="Tyler M.J."/>
            <person name="Ramsay S.L."/>
        </authorList>
    </citation>
    <scope>PROTEIN SEQUENCE</scope>
    <scope>AMIDATION AT LEU-12</scope>
    <scope>MASS SPECTROMETRY</scope>
</reference>
<proteinExistence type="evidence at protein level"/>
<accession>P62582</accession>
<accession>P56246</accession>
<evidence type="ECO:0000269" key="1">
    <source>
    </source>
</evidence>
<dbReference type="GO" id="GO:0005576">
    <property type="term" value="C:extracellular region"/>
    <property type="evidence" value="ECO:0007669"/>
    <property type="project" value="UniProtKB-SubCell"/>
</dbReference>
<dbReference type="GO" id="GO:0006952">
    <property type="term" value="P:defense response"/>
    <property type="evidence" value="ECO:0007669"/>
    <property type="project" value="UniProtKB-KW"/>
</dbReference>
<name>CDN14_RANXA</name>
<feature type="peptide" id="PRO_0000043760" description="Caeridin-1.4">
    <location>
        <begin position="1"/>
        <end position="12"/>
    </location>
</feature>
<feature type="modified residue" description="Leucine amide" evidence="1">
    <location>
        <position position="12"/>
    </location>
</feature>